<reference key="1">
    <citation type="submission" date="2006-12" db="EMBL/GenBank/DDBJ databases">
        <title>Complete sequence of Halorhodospira halophila SL1.</title>
        <authorList>
            <consortium name="US DOE Joint Genome Institute"/>
            <person name="Copeland A."/>
            <person name="Lucas S."/>
            <person name="Lapidus A."/>
            <person name="Barry K."/>
            <person name="Detter J.C."/>
            <person name="Glavina del Rio T."/>
            <person name="Hammon N."/>
            <person name="Israni S."/>
            <person name="Dalin E."/>
            <person name="Tice H."/>
            <person name="Pitluck S."/>
            <person name="Saunders E."/>
            <person name="Brettin T."/>
            <person name="Bruce D."/>
            <person name="Han C."/>
            <person name="Tapia R."/>
            <person name="Schmutz J."/>
            <person name="Larimer F."/>
            <person name="Land M."/>
            <person name="Hauser L."/>
            <person name="Kyrpides N."/>
            <person name="Mikhailova N."/>
            <person name="Hoff W."/>
            <person name="Richardson P."/>
        </authorList>
    </citation>
    <scope>NUCLEOTIDE SEQUENCE [LARGE SCALE GENOMIC DNA]</scope>
    <source>
        <strain>DSM 244 / SL1</strain>
    </source>
</reference>
<evidence type="ECO:0000255" key="1">
    <source>
        <dbReference type="HAMAP-Rule" id="MF_00236"/>
    </source>
</evidence>
<evidence type="ECO:0000256" key="2">
    <source>
        <dbReference type="SAM" id="MobiDB-lite"/>
    </source>
</evidence>
<feature type="chain" id="PRO_1000071813" description="Sec-independent protein translocase protein TatA">
    <location>
        <begin position="1"/>
        <end position="97"/>
    </location>
</feature>
<feature type="transmembrane region" description="Helical" evidence="1">
    <location>
        <begin position="1"/>
        <end position="21"/>
    </location>
</feature>
<feature type="region of interest" description="Disordered" evidence="2">
    <location>
        <begin position="28"/>
        <end position="97"/>
    </location>
</feature>
<feature type="compositionally biased region" description="Basic and acidic residues" evidence="2">
    <location>
        <begin position="37"/>
        <end position="56"/>
    </location>
</feature>
<feature type="compositionally biased region" description="Low complexity" evidence="2">
    <location>
        <begin position="78"/>
        <end position="87"/>
    </location>
</feature>
<feature type="compositionally biased region" description="Basic and acidic residues" evidence="2">
    <location>
        <begin position="88"/>
        <end position="97"/>
    </location>
</feature>
<keyword id="KW-0997">Cell inner membrane</keyword>
<keyword id="KW-1003">Cell membrane</keyword>
<keyword id="KW-0472">Membrane</keyword>
<keyword id="KW-0653">Protein transport</keyword>
<keyword id="KW-1185">Reference proteome</keyword>
<keyword id="KW-0811">Translocation</keyword>
<keyword id="KW-0812">Transmembrane</keyword>
<keyword id="KW-1133">Transmembrane helix</keyword>
<keyword id="KW-0813">Transport</keyword>
<protein>
    <recommendedName>
        <fullName evidence="1">Sec-independent protein translocase protein TatA</fullName>
    </recommendedName>
</protein>
<proteinExistence type="inferred from homology"/>
<name>TATA_HALHL</name>
<dbReference type="EMBL" id="CP000544">
    <property type="protein sequence ID" value="ABM61865.1"/>
    <property type="molecule type" value="Genomic_DNA"/>
</dbReference>
<dbReference type="RefSeq" id="WP_011813888.1">
    <property type="nucleotide sequence ID" value="NC_008789.1"/>
</dbReference>
<dbReference type="SMR" id="A1WW03"/>
<dbReference type="STRING" id="349124.Hhal_1089"/>
<dbReference type="KEGG" id="hha:Hhal_1089"/>
<dbReference type="eggNOG" id="COG1826">
    <property type="taxonomic scope" value="Bacteria"/>
</dbReference>
<dbReference type="HOGENOM" id="CLU_086034_5_1_6"/>
<dbReference type="OrthoDB" id="7066617at2"/>
<dbReference type="Proteomes" id="UP000000647">
    <property type="component" value="Chromosome"/>
</dbReference>
<dbReference type="GO" id="GO:0033281">
    <property type="term" value="C:TAT protein transport complex"/>
    <property type="evidence" value="ECO:0007669"/>
    <property type="project" value="UniProtKB-UniRule"/>
</dbReference>
<dbReference type="GO" id="GO:0008320">
    <property type="term" value="F:protein transmembrane transporter activity"/>
    <property type="evidence" value="ECO:0007669"/>
    <property type="project" value="UniProtKB-UniRule"/>
</dbReference>
<dbReference type="GO" id="GO:0043953">
    <property type="term" value="P:protein transport by the Tat complex"/>
    <property type="evidence" value="ECO:0007669"/>
    <property type="project" value="UniProtKB-UniRule"/>
</dbReference>
<dbReference type="Gene3D" id="1.20.5.3310">
    <property type="match status" value="1"/>
</dbReference>
<dbReference type="HAMAP" id="MF_00236">
    <property type="entry name" value="TatA_E"/>
    <property type="match status" value="1"/>
</dbReference>
<dbReference type="InterPro" id="IPR003369">
    <property type="entry name" value="TatA/B/E"/>
</dbReference>
<dbReference type="InterPro" id="IPR006312">
    <property type="entry name" value="TatA/E"/>
</dbReference>
<dbReference type="NCBIfam" id="NF002813">
    <property type="entry name" value="PRK02958.1"/>
    <property type="match status" value="1"/>
</dbReference>
<dbReference type="NCBIfam" id="TIGR01411">
    <property type="entry name" value="tatAE"/>
    <property type="match status" value="1"/>
</dbReference>
<dbReference type="PANTHER" id="PTHR42982">
    <property type="entry name" value="SEC-INDEPENDENT PROTEIN TRANSLOCASE PROTEIN TATA"/>
    <property type="match status" value="1"/>
</dbReference>
<dbReference type="PANTHER" id="PTHR42982:SF1">
    <property type="entry name" value="SEC-INDEPENDENT PROTEIN TRANSLOCASE PROTEIN TATA"/>
    <property type="match status" value="1"/>
</dbReference>
<dbReference type="Pfam" id="PF02416">
    <property type="entry name" value="TatA_B_E"/>
    <property type="match status" value="1"/>
</dbReference>
<gene>
    <name evidence="1" type="primary">tatA</name>
    <name type="ordered locus">Hhal_1089</name>
</gene>
<sequence length="97" mass="10720">MGFNIWSLLIILLIVALLFGTKKLRNIGGDLGGAIRGFKESMREGEEEEAQKRADGESSDEPEPLEHQDEPAPEQTTQARESSSARQSAEHHDRSTS</sequence>
<accession>A1WW03</accession>
<organism>
    <name type="scientific">Halorhodospira halophila (strain DSM 244 / SL1)</name>
    <name type="common">Ectothiorhodospira halophila (strain DSM 244 / SL1)</name>
    <dbReference type="NCBI Taxonomy" id="349124"/>
    <lineage>
        <taxon>Bacteria</taxon>
        <taxon>Pseudomonadati</taxon>
        <taxon>Pseudomonadota</taxon>
        <taxon>Gammaproteobacteria</taxon>
        <taxon>Chromatiales</taxon>
        <taxon>Ectothiorhodospiraceae</taxon>
        <taxon>Halorhodospira</taxon>
    </lineage>
</organism>
<comment type="function">
    <text evidence="1">Part of the twin-arginine translocation (Tat) system that transports large folded proteins containing a characteristic twin-arginine motif in their signal peptide across membranes. TatA could form the protein-conducting channel of the Tat system.</text>
</comment>
<comment type="subunit">
    <text evidence="1">The Tat system comprises two distinct complexes: a TatABC complex, containing multiple copies of TatA, TatB and TatC subunits, and a separate TatA complex, containing only TatA subunits. Substrates initially bind to the TatABC complex, which probably triggers association of the separate TatA complex to form the active translocon.</text>
</comment>
<comment type="subcellular location">
    <subcellularLocation>
        <location evidence="1">Cell inner membrane</location>
        <topology evidence="1">Single-pass membrane protein</topology>
    </subcellularLocation>
</comment>
<comment type="similarity">
    <text evidence="1">Belongs to the TatA/E family.</text>
</comment>